<feature type="chain" id="PRO_0000234604" description="Coiled-coil domain-containing protein 93">
    <location>
        <begin position="1"/>
        <end position="631"/>
    </location>
</feature>
<feature type="region of interest" description="Sufficient for interaction with CCDC22" evidence="5">
    <location>
        <begin position="1"/>
        <end position="430"/>
    </location>
</feature>
<feature type="region of interest" description="Disordered" evidence="1">
    <location>
        <begin position="1"/>
        <end position="23"/>
    </location>
</feature>
<feature type="region of interest" description="Disordered" evidence="1">
    <location>
        <begin position="214"/>
        <end position="243"/>
    </location>
</feature>
<feature type="region of interest" description="Disordered" evidence="1">
    <location>
        <begin position="421"/>
        <end position="447"/>
    </location>
</feature>
<feature type="region of interest" description="Sufficient for interaction with WASHC2C" evidence="5">
    <location>
        <begin position="448"/>
        <end position="631"/>
    </location>
</feature>
<feature type="coiled-coil region" evidence="8 12">
    <location>
        <begin position="309"/>
        <end position="631"/>
    </location>
</feature>
<feature type="compositionally biased region" description="Basic and acidic residues" evidence="1">
    <location>
        <begin position="215"/>
        <end position="225"/>
    </location>
</feature>
<feature type="compositionally biased region" description="Basic and acidic residues" evidence="1">
    <location>
        <begin position="421"/>
        <end position="433"/>
    </location>
</feature>
<feature type="modified residue" description="Phosphoserine" evidence="15">
    <location>
        <position position="298"/>
    </location>
</feature>
<feature type="modified residue" description="Phosphoserine" evidence="15">
    <location>
        <position position="301"/>
    </location>
</feature>
<feature type="modified residue" description="Phosphoserine" evidence="15">
    <location>
        <position position="305"/>
    </location>
</feature>
<feature type="sequence variant" id="VAR_054108" description="In dbSNP:rs33975708." evidence="2 3">
    <original>R</original>
    <variation>C</variation>
    <location>
        <position position="179"/>
    </location>
</feature>
<feature type="sequence variant" id="VAR_054109" description="In dbSNP:rs34095554." evidence="3">
    <original>R</original>
    <variation>C</variation>
    <location>
        <position position="213"/>
    </location>
</feature>
<feature type="sequence variant" id="VAR_054110" description="In dbSNP:rs17512204.">
    <original>P</original>
    <variation>L</variation>
    <location>
        <position position="228"/>
    </location>
</feature>
<feature type="sequence variant" id="VAR_035499" description="In a colorectal cancer sample; somatic mutation; dbSNP:rs1679285734." evidence="4">
    <original>H</original>
    <variation>R</variation>
    <location>
        <position position="315"/>
    </location>
</feature>
<feature type="sequence variant" id="VAR_054111" description="In dbSNP:rs17047557.">
    <original>Y</original>
    <variation>H</variation>
    <location>
        <position position="465"/>
    </location>
</feature>
<feature type="mutagenesis site" description="Impairs interaction with DENND10." evidence="7">
    <original>H</original>
    <variation>R</variation>
    <location>
        <position position="406"/>
    </location>
</feature>
<feature type="mutagenesis site" description="Impairs interaction with DENND10." evidence="7">
    <original>E</original>
    <variation>K</variation>
    <location>
        <position position="410"/>
    </location>
</feature>
<feature type="sequence conflict" description="In Ref. 5; AAH28609." evidence="9" ref="5">
    <original>Y</original>
    <variation>H</variation>
    <location>
        <position position="39"/>
    </location>
</feature>
<feature type="sequence conflict" description="In Ref. 2; BAA91945." evidence="9" ref="2">
    <original>L</original>
    <variation>P</variation>
    <location>
        <position position="504"/>
    </location>
</feature>
<feature type="helix" evidence="16">
    <location>
        <begin position="27"/>
        <end position="37"/>
    </location>
</feature>
<feature type="helix" evidence="16">
    <location>
        <begin position="40"/>
        <end position="42"/>
    </location>
</feature>
<feature type="helix" evidence="16">
    <location>
        <begin position="49"/>
        <end position="64"/>
    </location>
</feature>
<feature type="helix" evidence="16">
    <location>
        <begin position="82"/>
        <end position="96"/>
    </location>
</feature>
<feature type="helix" evidence="16">
    <location>
        <begin position="105"/>
        <end position="110"/>
    </location>
</feature>
<feature type="helix" evidence="16">
    <location>
        <begin position="113"/>
        <end position="134"/>
    </location>
</feature>
<feature type="helix" evidence="16">
    <location>
        <begin position="137"/>
        <end position="147"/>
    </location>
</feature>
<feature type="helix" evidence="16">
    <location>
        <begin position="153"/>
        <end position="175"/>
    </location>
</feature>
<feature type="strand" evidence="16">
    <location>
        <begin position="182"/>
        <end position="184"/>
    </location>
</feature>
<feature type="strand" evidence="16">
    <location>
        <begin position="186"/>
        <end position="188"/>
    </location>
</feature>
<feature type="helix" evidence="16">
    <location>
        <begin position="194"/>
        <end position="203"/>
    </location>
</feature>
<feature type="turn" evidence="16">
    <location>
        <begin position="204"/>
        <end position="206"/>
    </location>
</feature>
<feature type="helix" evidence="16">
    <location>
        <begin position="249"/>
        <end position="257"/>
    </location>
</feature>
<feature type="strand" evidence="16">
    <location>
        <begin position="260"/>
        <end position="262"/>
    </location>
</feature>
<feature type="helix" evidence="16">
    <location>
        <begin position="274"/>
        <end position="295"/>
    </location>
</feature>
<keyword id="KW-0002">3D-structure</keyword>
<keyword id="KW-0175">Coiled coil</keyword>
<keyword id="KW-0967">Endosome</keyword>
<keyword id="KW-0597">Phosphoprotein</keyword>
<keyword id="KW-0653">Protein transport</keyword>
<keyword id="KW-1267">Proteomics identification</keyword>
<keyword id="KW-1185">Reference proteome</keyword>
<keyword id="KW-0813">Transport</keyword>
<protein>
    <recommendedName>
        <fullName>Coiled-coil domain-containing protein 93</fullName>
    </recommendedName>
</protein>
<proteinExistence type="evidence at protein level"/>
<dbReference type="EMBL" id="AB209993">
    <property type="protein sequence ID" value="BAE06075.1"/>
    <property type="status" value="ALT_INIT"/>
    <property type="molecule type" value="mRNA"/>
</dbReference>
<dbReference type="EMBL" id="AK001858">
    <property type="protein sequence ID" value="BAA91945.1"/>
    <property type="molecule type" value="mRNA"/>
</dbReference>
<dbReference type="EMBL" id="AK025611">
    <property type="protein sequence ID" value="BAB15188.1"/>
    <property type="status" value="ALT_INIT"/>
    <property type="molecule type" value="mRNA"/>
</dbReference>
<dbReference type="EMBL" id="AK290722">
    <property type="protein sequence ID" value="BAF83411.1"/>
    <property type="molecule type" value="mRNA"/>
</dbReference>
<dbReference type="EMBL" id="AC009303">
    <property type="protein sequence ID" value="AAX93279.1"/>
    <property type="status" value="ALT_SEQ"/>
    <property type="molecule type" value="Genomic_DNA"/>
</dbReference>
<dbReference type="EMBL" id="AC009404">
    <property type="status" value="NOT_ANNOTATED_CDS"/>
    <property type="molecule type" value="Genomic_DNA"/>
</dbReference>
<dbReference type="EMBL" id="CH471103">
    <property type="protein sequence ID" value="EAW95197.1"/>
    <property type="molecule type" value="Genomic_DNA"/>
</dbReference>
<dbReference type="EMBL" id="BC028609">
    <property type="protein sequence ID" value="AAH28609.2"/>
    <property type="molecule type" value="mRNA"/>
</dbReference>
<dbReference type="EMBL" id="BC093018">
    <property type="protein sequence ID" value="AAH93018.1"/>
    <property type="molecule type" value="mRNA"/>
</dbReference>
<dbReference type="CCDS" id="CCDS2121.2"/>
<dbReference type="RefSeq" id="NP_061917.3">
    <property type="nucleotide sequence ID" value="NM_019044.4"/>
</dbReference>
<dbReference type="PDB" id="8F2U">
    <property type="method" value="EM"/>
    <property type="resolution" value="3.53 A"/>
    <property type="chains" value="N=1-631"/>
</dbReference>
<dbReference type="PDB" id="8P0V">
    <property type="method" value="EM"/>
    <property type="resolution" value="6.50 A"/>
    <property type="chains" value="K=1-631"/>
</dbReference>
<dbReference type="PDB" id="8P0W">
    <property type="method" value="EM"/>
    <property type="resolution" value="2.90 A"/>
    <property type="chains" value="K=1-631"/>
</dbReference>
<dbReference type="PDB" id="8P0X">
    <property type="method" value="EM"/>
    <property type="resolution" value="7.50 A"/>
    <property type="chains" value="K=1-631"/>
</dbReference>
<dbReference type="PDBsum" id="8F2U"/>
<dbReference type="PDBsum" id="8P0V"/>
<dbReference type="PDBsum" id="8P0W"/>
<dbReference type="PDBsum" id="8P0X"/>
<dbReference type="EMDB" id="EMD-17339"/>
<dbReference type="EMDB" id="EMD-17340"/>
<dbReference type="EMDB" id="EMD-17341"/>
<dbReference type="EMDB" id="EMD-17342"/>
<dbReference type="EMDB" id="EMD-28827"/>
<dbReference type="SMR" id="Q567U6"/>
<dbReference type="BioGRID" id="120013">
    <property type="interactions" value="108"/>
</dbReference>
<dbReference type="ComplexPortal" id="CPX-2211">
    <property type="entry name" value="Commander complex"/>
</dbReference>
<dbReference type="CORUM" id="Q567U6"/>
<dbReference type="FunCoup" id="Q567U6">
    <property type="interactions" value="2789"/>
</dbReference>
<dbReference type="IntAct" id="Q567U6">
    <property type="interactions" value="56"/>
</dbReference>
<dbReference type="MINT" id="Q567U6"/>
<dbReference type="STRING" id="9606.ENSP00000365477"/>
<dbReference type="TCDB" id="9.A.3.1.2">
    <property type="family name" value="the sorting nexin27 (snx27)-retromer assembly apparatus (retromeraa) family"/>
</dbReference>
<dbReference type="GlyGen" id="Q567U6">
    <property type="glycosylation" value="1 site, 1 O-linked glycan (1 site)"/>
</dbReference>
<dbReference type="iPTMnet" id="Q567U6"/>
<dbReference type="PhosphoSitePlus" id="Q567U6"/>
<dbReference type="BioMuta" id="CCDC93"/>
<dbReference type="DMDM" id="97046413"/>
<dbReference type="jPOST" id="Q567U6"/>
<dbReference type="MassIVE" id="Q567U6"/>
<dbReference type="PaxDb" id="9606-ENSP00000365477"/>
<dbReference type="PeptideAtlas" id="Q567U6"/>
<dbReference type="ProteomicsDB" id="62566"/>
<dbReference type="Pumba" id="Q567U6"/>
<dbReference type="Antibodypedia" id="33361">
    <property type="antibodies" value="249 antibodies from 19 providers"/>
</dbReference>
<dbReference type="DNASU" id="54520"/>
<dbReference type="Ensembl" id="ENST00000376300.7">
    <property type="protein sequence ID" value="ENSP00000365477.2"/>
    <property type="gene ID" value="ENSG00000125633.11"/>
</dbReference>
<dbReference type="GeneID" id="54520"/>
<dbReference type="KEGG" id="hsa:54520"/>
<dbReference type="MANE-Select" id="ENST00000376300.7">
    <property type="protein sequence ID" value="ENSP00000365477.2"/>
    <property type="RefSeq nucleotide sequence ID" value="NM_019044.5"/>
    <property type="RefSeq protein sequence ID" value="NP_061917.3"/>
</dbReference>
<dbReference type="UCSC" id="uc002tlj.4">
    <property type="organism name" value="human"/>
</dbReference>
<dbReference type="AGR" id="HGNC:25611"/>
<dbReference type="CTD" id="54520"/>
<dbReference type="DisGeNET" id="54520"/>
<dbReference type="GeneCards" id="CCDC93"/>
<dbReference type="HGNC" id="HGNC:25611">
    <property type="gene designation" value="CCDC93"/>
</dbReference>
<dbReference type="HPA" id="ENSG00000125633">
    <property type="expression patterns" value="Low tissue specificity"/>
</dbReference>
<dbReference type="MIM" id="620553">
    <property type="type" value="gene"/>
</dbReference>
<dbReference type="neXtProt" id="NX_Q567U6"/>
<dbReference type="OpenTargets" id="ENSG00000125633"/>
<dbReference type="PharmGKB" id="PA144596460"/>
<dbReference type="VEuPathDB" id="HostDB:ENSG00000125633"/>
<dbReference type="eggNOG" id="KOG2701">
    <property type="taxonomic scope" value="Eukaryota"/>
</dbReference>
<dbReference type="GeneTree" id="ENSGT00390000011294"/>
<dbReference type="InParanoid" id="Q567U6"/>
<dbReference type="OMA" id="YERQEAP"/>
<dbReference type="OrthoDB" id="16092at2759"/>
<dbReference type="PAN-GO" id="Q567U6">
    <property type="GO annotations" value="1 GO annotation based on evolutionary models"/>
</dbReference>
<dbReference type="PhylomeDB" id="Q567U6"/>
<dbReference type="TreeFam" id="TF323318"/>
<dbReference type="PathwayCommons" id="Q567U6"/>
<dbReference type="SignaLink" id="Q567U6"/>
<dbReference type="BioGRID-ORCS" id="54520">
    <property type="hits" value="42 hits in 1172 CRISPR screens"/>
</dbReference>
<dbReference type="CD-CODE" id="FB4E32DD">
    <property type="entry name" value="Presynaptic clusters and postsynaptic densities"/>
</dbReference>
<dbReference type="ChiTaRS" id="CCDC93">
    <property type="organism name" value="human"/>
</dbReference>
<dbReference type="GeneWiki" id="CCDC93"/>
<dbReference type="GenomeRNAi" id="54520"/>
<dbReference type="Pharos" id="Q567U6">
    <property type="development level" value="Tbio"/>
</dbReference>
<dbReference type="PRO" id="PR:Q567U6"/>
<dbReference type="Proteomes" id="UP000005640">
    <property type="component" value="Chromosome 2"/>
</dbReference>
<dbReference type="RNAct" id="Q567U6">
    <property type="molecule type" value="protein"/>
</dbReference>
<dbReference type="Bgee" id="ENSG00000125633">
    <property type="expression patterns" value="Expressed in sural nerve and 205 other cell types or tissues"/>
</dbReference>
<dbReference type="ExpressionAtlas" id="Q567U6">
    <property type="expression patterns" value="baseline and differential"/>
</dbReference>
<dbReference type="GO" id="GO:0005769">
    <property type="term" value="C:early endosome"/>
    <property type="evidence" value="ECO:0007669"/>
    <property type="project" value="UniProtKB-SubCell"/>
</dbReference>
<dbReference type="GO" id="GO:0043231">
    <property type="term" value="C:intracellular membrane-bounded organelle"/>
    <property type="evidence" value="ECO:0000314"/>
    <property type="project" value="HPA"/>
</dbReference>
<dbReference type="GO" id="GO:0032456">
    <property type="term" value="P:endocytic recycling"/>
    <property type="evidence" value="ECO:0000315"/>
    <property type="project" value="UniProtKB"/>
</dbReference>
<dbReference type="GO" id="GO:0006893">
    <property type="term" value="P:Golgi to plasma membrane transport"/>
    <property type="evidence" value="ECO:0000315"/>
    <property type="project" value="UniProtKB"/>
</dbReference>
<dbReference type="GO" id="GO:0015031">
    <property type="term" value="P:protein transport"/>
    <property type="evidence" value="ECO:0007669"/>
    <property type="project" value="UniProtKB-KW"/>
</dbReference>
<dbReference type="InterPro" id="IPR039116">
    <property type="entry name" value="CCDC93"/>
</dbReference>
<dbReference type="InterPro" id="IPR019159">
    <property type="entry name" value="CCDC93_CC"/>
</dbReference>
<dbReference type="InterPro" id="IPR048747">
    <property type="entry name" value="CCDC93_N"/>
</dbReference>
<dbReference type="PANTHER" id="PTHR16441:SF0">
    <property type="entry name" value="COILED-COIL DOMAIN-CONTAINING PROTEIN 93"/>
    <property type="match status" value="1"/>
</dbReference>
<dbReference type="PANTHER" id="PTHR16441">
    <property type="entry name" value="FIDIPIDINE"/>
    <property type="match status" value="1"/>
</dbReference>
<dbReference type="Pfam" id="PF09762">
    <property type="entry name" value="CCDC93_CC"/>
    <property type="match status" value="1"/>
</dbReference>
<dbReference type="Pfam" id="PF21673">
    <property type="entry name" value="CCDC93_N"/>
    <property type="match status" value="1"/>
</dbReference>
<comment type="function">
    <text evidence="5 6 7 8">Component of the commander complex that is essential for endosomal recycling of transmembrane cargos; the commander complex is composed of composed of the CCC subcomplex and the retriever subcomplex (PubMed:37172566, PubMed:38459129). Component of the CCC complex, which is involved in the regulation of endosomal recycling of surface proteins, including integrins, signaling receptor and channels (PubMed:37172566, PubMed:38459129). The CCC complex associates with SNX17, retriever and WASH complexes to prevent lysosomal degradation and promote cell surface recycling of numerous cargos such as integrins ITGA5:ITGB1 (PubMed:25355947, PubMed:28892079). Involved in copper-dependent ATP7A trafficking between the trans-Golgi network and vesicles in the cell periphery; the function is proposed to depend on its association within the CCC complex and cooperation with the WASH complex on early endosomes and is dependent on its interaction with WASHC2C (PubMed:25355947).</text>
</comment>
<comment type="function">
    <text evidence="6">(Microbial infection) The CCC complex, in collaboration with the heterotrimeric retriever complex, mediates the exit of human papillomavirus to the cell surface.</text>
</comment>
<comment type="subunit">
    <text evidence="5 6 7 8 10">Component of the commander complex consisting of the CCC subcomplex and the retriever subcomplex (PubMed:37172566, PubMed:38459129, PubMed:25355947, PubMed:28892079). Component of the CCC (COMMD/CCDC22/CCDC93) subcomplex consisting of COMMD1, COMMD2, COMMD3, COMMD4, COMMD5, COMMD6, COMMD7, COMMD8, COMMD9, COMMD10, CCDC22 and CCDC93 (PubMed:37172566, PubMed:38459129, PubMed:25355947, PubMed:28892079). Forms a coiled-coil heterodimer with CCDC22; this heterodimer interacts with the guanine nucleotide exchange factor DENND10; the interaction is direct (PubMed:37172566, PubMed:38459129). Interacts with WASHC1 (PubMed:25355947). Interacts directly with WASHC2C (PubMed:25355947). Interacts with SNX17 and SNX31 (PubMed:28892079).</text>
</comment>
<comment type="interaction">
    <interactant intactId="EBI-1104769">
        <id>Q567U6</id>
    </interactant>
    <interactant intactId="EBI-3943153">
        <id>O60826</id>
        <label>CCDC22</label>
    </interactant>
    <organismsDiffer>false</organismsDiffer>
    <experiments>30</experiments>
</comment>
<comment type="interaction">
    <interactant intactId="EBI-1104769">
        <id>Q567U6</id>
    </interactant>
    <interactant intactId="EBI-1550112">
        <id>Q8N668</id>
        <label>COMMD1</label>
    </interactant>
    <organismsDiffer>false</organismsDiffer>
    <experiments>18</experiments>
</comment>
<comment type="interaction">
    <interactant intactId="EBI-1104769">
        <id>Q567U6</id>
    </interactant>
    <interactant intactId="EBI-1550310">
        <id>Q9Y6G5</id>
        <label>COMMD10</label>
    </interactant>
    <organismsDiffer>false</organismsDiffer>
    <experiments>7</experiments>
</comment>
<comment type="interaction">
    <interactant intactId="EBI-1104769">
        <id>Q567U6</id>
    </interactant>
    <interactant intactId="EBI-1550220">
        <id>Q86X83</id>
        <label>COMMD2</label>
    </interactant>
    <organismsDiffer>false</organismsDiffer>
    <experiments>7</experiments>
</comment>
<comment type="interaction">
    <interactant intactId="EBI-1104769">
        <id>Q567U6</id>
    </interactant>
    <interactant intactId="EBI-714979">
        <id>Q9UBI1</id>
        <label>COMMD3</label>
    </interactant>
    <organismsDiffer>false</organismsDiffer>
    <experiments>7</experiments>
</comment>
<comment type="interaction">
    <interactant intactId="EBI-1104769">
        <id>Q567U6</id>
    </interactant>
    <interactant intactId="EBI-1550064">
        <id>Q9H0A8</id>
        <label>COMMD4</label>
    </interactant>
    <organismsDiffer>false</organismsDiffer>
    <experiments>6</experiments>
</comment>
<comment type="interaction">
    <interactant intactId="EBI-1104769">
        <id>Q567U6</id>
    </interactant>
    <interactant intactId="EBI-1550256">
        <id>Q9GZQ3</id>
        <label>COMMD5</label>
    </interactant>
    <organismsDiffer>false</organismsDiffer>
    <experiments>6</experiments>
</comment>
<comment type="interaction">
    <interactant intactId="EBI-1104769">
        <id>Q567U6</id>
    </interactant>
    <interactant intactId="EBI-1550081">
        <id>Q7Z4G1</id>
        <label>COMMD6</label>
    </interactant>
    <organismsDiffer>false</organismsDiffer>
    <experiments>8</experiments>
</comment>
<comment type="interaction">
    <interactant intactId="EBI-1104769">
        <id>Q567U6</id>
    </interactant>
    <interactant intactId="EBI-1550280">
        <id>Q86VX2</id>
        <label>COMMD7</label>
    </interactant>
    <organismsDiffer>false</organismsDiffer>
    <experiments>3</experiments>
</comment>
<comment type="interaction">
    <interactant intactId="EBI-1104769">
        <id>Q567U6</id>
    </interactant>
    <interactant intactId="EBI-725694">
        <id>Q9NX08</id>
        <label>COMMD8</label>
    </interactant>
    <organismsDiffer>false</organismsDiffer>
    <experiments>6</experiments>
</comment>
<comment type="interaction">
    <interactant intactId="EBI-1104769">
        <id>Q567U6</id>
    </interactant>
    <interactant intactId="EBI-1550510">
        <id>Q9P000</id>
        <label>COMMD9</label>
    </interactant>
    <organismsDiffer>false</organismsDiffer>
    <experiments>4</experiments>
</comment>
<comment type="interaction">
    <interactant intactId="EBI-1104769">
        <id>Q567U6</id>
    </interactant>
    <interactant intactId="EBI-725416">
        <id>Q8TCE6</id>
        <label>DENND10</label>
    </interactant>
    <organismsDiffer>false</organismsDiffer>
    <experiments>6</experiments>
</comment>
<comment type="interaction">
    <interactant intactId="EBI-1104769">
        <id>Q567U6</id>
    </interactant>
    <interactant intactId="EBI-2870155">
        <id>Q641Q2</id>
        <label>WASHC2A</label>
    </interactant>
    <organismsDiffer>false</organismsDiffer>
    <experiments>9</experiments>
</comment>
<comment type="subcellular location">
    <subcellularLocation>
        <location evidence="10">Early endosome</location>
    </subcellularLocation>
</comment>
<comment type="similarity">
    <text evidence="9">Belongs to the CCDC93 family.</text>
</comment>
<comment type="sequence caution" evidence="9">
    <conflict type="erroneous initiation">
        <sequence resource="EMBL-CDS" id="BAB15188"/>
    </conflict>
    <text>Truncated N-terminus.</text>
</comment>
<comment type="sequence caution" evidence="9">
    <conflict type="erroneous initiation">
        <sequence resource="EMBL-CDS" id="BAE06075"/>
    </conflict>
    <text>Extended N-terminus.</text>
</comment>
<evidence type="ECO:0000256" key="1">
    <source>
        <dbReference type="SAM" id="MobiDB-lite"/>
    </source>
</evidence>
<evidence type="ECO:0000269" key="2">
    <source>
    </source>
</evidence>
<evidence type="ECO:0000269" key="3">
    <source>
    </source>
</evidence>
<evidence type="ECO:0000269" key="4">
    <source>
    </source>
</evidence>
<evidence type="ECO:0000269" key="5">
    <source>
    </source>
</evidence>
<evidence type="ECO:0000269" key="6">
    <source>
    </source>
</evidence>
<evidence type="ECO:0000269" key="7">
    <source>
    </source>
</evidence>
<evidence type="ECO:0000269" key="8">
    <source>
    </source>
</evidence>
<evidence type="ECO:0000305" key="9"/>
<evidence type="ECO:0000305" key="10">
    <source>
    </source>
</evidence>
<evidence type="ECO:0007744" key="11">
    <source>
        <dbReference type="PDB" id="8F2U"/>
    </source>
</evidence>
<evidence type="ECO:0007744" key="12">
    <source>
        <dbReference type="PDB" id="8P0V"/>
    </source>
</evidence>
<evidence type="ECO:0007744" key="13">
    <source>
        <dbReference type="PDB" id="8P0W"/>
    </source>
</evidence>
<evidence type="ECO:0007744" key="14">
    <source>
        <dbReference type="PDB" id="8P0X"/>
    </source>
</evidence>
<evidence type="ECO:0007744" key="15">
    <source>
    </source>
</evidence>
<evidence type="ECO:0007829" key="16">
    <source>
        <dbReference type="PDB" id="8P0W"/>
    </source>
</evidence>
<gene>
    <name type="primary">CCDC93</name>
</gene>
<sequence>MGLPRGPEGQGLPEVETREDEEQNVKLTEILELLVAAGYFRARIKGLSPFDKVVGGMTWCITTCNFDVDVDLLFQENSTIGQKIALSEKIVSVLPRMKCPHQLEPHQIQGMDFIHIFPVVQWLVKRAIETKEEMGDYIRSYSVSQFQKTYSLPEDDDFIKRKEKAIKTVVDLSEVYKPRRKYKRHQGAEELLDEESRIHATLLEYGRRYGFSRQSKMEKAEDKKTALPAGLSATEKADAHEEDELRAAEEQRIQSLMTKMTAMANEESRLTASSVGQIVGLCSAEIKQIVSEYAEKQSELSAEESPEKLGTSQLHRRKVISLNKQIAQKTKHLEELRASHTSLQARYNEAKKTLTELKTYSEKLDKEQAALEKIESKADPSILQNLRALVAMNENLKSQEQEFKAHCREEMTRLQQEIENLKAERAPRGDEKTLSSGEPPGTLTSAMTHDEDLDRRYNMEKEKLYKIRLLQARRNREIAILHRKIDEVPSRAELIQYQKRFIELYRQISAVHKETKQFFTLYNTLDDKKVYLEKEISLLNSIHENFSQAMASPAARDQFLRQMEQIVEGIKQSRMKMEKKKQENKMRRDQLNDQYLELLEKQRLYFKTVKEFKEEGRKNEMLLSKVKAKAS</sequence>
<accession>Q567U6</accession>
<accession>A8K3V7</accession>
<accession>Q4LE78</accession>
<accession>Q53TJ2</accession>
<accession>Q8TBX5</accession>
<accession>Q9H6R5</accession>
<accession>Q9NV15</accession>
<organism>
    <name type="scientific">Homo sapiens</name>
    <name type="common">Human</name>
    <dbReference type="NCBI Taxonomy" id="9606"/>
    <lineage>
        <taxon>Eukaryota</taxon>
        <taxon>Metazoa</taxon>
        <taxon>Chordata</taxon>
        <taxon>Craniata</taxon>
        <taxon>Vertebrata</taxon>
        <taxon>Euteleostomi</taxon>
        <taxon>Mammalia</taxon>
        <taxon>Eutheria</taxon>
        <taxon>Euarchontoglires</taxon>
        <taxon>Primates</taxon>
        <taxon>Haplorrhini</taxon>
        <taxon>Catarrhini</taxon>
        <taxon>Hominidae</taxon>
        <taxon>Homo</taxon>
    </lineage>
</organism>
<name>CCD93_HUMAN</name>
<reference key="1">
    <citation type="submission" date="2005-03" db="EMBL/GenBank/DDBJ databases">
        <title>Preparation of a set of expression-ready clones of mammalian long cDNAs encoding large proteins by the ORF trap cloning method.</title>
        <authorList>
            <person name="Nakajima D."/>
            <person name="Saito K."/>
            <person name="Yamakawa H."/>
            <person name="Kikuno R.F."/>
            <person name="Nakayama M."/>
            <person name="Ohara R."/>
            <person name="Okazaki N."/>
            <person name="Koga H."/>
            <person name="Nagase T."/>
            <person name="Ohara O."/>
        </authorList>
    </citation>
    <scope>NUCLEOTIDE SEQUENCE [LARGE SCALE MRNA]</scope>
</reference>
<reference key="2">
    <citation type="journal article" date="2004" name="Nat. Genet.">
        <title>Complete sequencing and characterization of 21,243 full-length human cDNAs.</title>
        <authorList>
            <person name="Ota T."/>
            <person name="Suzuki Y."/>
            <person name="Nishikawa T."/>
            <person name="Otsuki T."/>
            <person name="Sugiyama T."/>
            <person name="Irie R."/>
            <person name="Wakamatsu A."/>
            <person name="Hayashi K."/>
            <person name="Sato H."/>
            <person name="Nagai K."/>
            <person name="Kimura K."/>
            <person name="Makita H."/>
            <person name="Sekine M."/>
            <person name="Obayashi M."/>
            <person name="Nishi T."/>
            <person name="Shibahara T."/>
            <person name="Tanaka T."/>
            <person name="Ishii S."/>
            <person name="Yamamoto J."/>
            <person name="Saito K."/>
            <person name="Kawai Y."/>
            <person name="Isono Y."/>
            <person name="Nakamura Y."/>
            <person name="Nagahari K."/>
            <person name="Murakami K."/>
            <person name="Yasuda T."/>
            <person name="Iwayanagi T."/>
            <person name="Wagatsuma M."/>
            <person name="Shiratori A."/>
            <person name="Sudo H."/>
            <person name="Hosoiri T."/>
            <person name="Kaku Y."/>
            <person name="Kodaira H."/>
            <person name="Kondo H."/>
            <person name="Sugawara M."/>
            <person name="Takahashi M."/>
            <person name="Kanda K."/>
            <person name="Yokoi T."/>
            <person name="Furuya T."/>
            <person name="Kikkawa E."/>
            <person name="Omura Y."/>
            <person name="Abe K."/>
            <person name="Kamihara K."/>
            <person name="Katsuta N."/>
            <person name="Sato K."/>
            <person name="Tanikawa M."/>
            <person name="Yamazaki M."/>
            <person name="Ninomiya K."/>
            <person name="Ishibashi T."/>
            <person name="Yamashita H."/>
            <person name="Murakawa K."/>
            <person name="Fujimori K."/>
            <person name="Tanai H."/>
            <person name="Kimata M."/>
            <person name="Watanabe M."/>
            <person name="Hiraoka S."/>
            <person name="Chiba Y."/>
            <person name="Ishida S."/>
            <person name="Ono Y."/>
            <person name="Takiguchi S."/>
            <person name="Watanabe S."/>
            <person name="Yosida M."/>
            <person name="Hotuta T."/>
            <person name="Kusano J."/>
            <person name="Kanehori K."/>
            <person name="Takahashi-Fujii A."/>
            <person name="Hara H."/>
            <person name="Tanase T.-O."/>
            <person name="Nomura Y."/>
            <person name="Togiya S."/>
            <person name="Komai F."/>
            <person name="Hara R."/>
            <person name="Takeuchi K."/>
            <person name="Arita M."/>
            <person name="Imose N."/>
            <person name="Musashino K."/>
            <person name="Yuuki H."/>
            <person name="Oshima A."/>
            <person name="Sasaki N."/>
            <person name="Aotsuka S."/>
            <person name="Yoshikawa Y."/>
            <person name="Matsunawa H."/>
            <person name="Ichihara T."/>
            <person name="Shiohata N."/>
            <person name="Sano S."/>
            <person name="Moriya S."/>
            <person name="Momiyama H."/>
            <person name="Satoh N."/>
            <person name="Takami S."/>
            <person name="Terashima Y."/>
            <person name="Suzuki O."/>
            <person name="Nakagawa S."/>
            <person name="Senoh A."/>
            <person name="Mizoguchi H."/>
            <person name="Goto Y."/>
            <person name="Shimizu F."/>
            <person name="Wakebe H."/>
            <person name="Hishigaki H."/>
            <person name="Watanabe T."/>
            <person name="Sugiyama A."/>
            <person name="Takemoto M."/>
            <person name="Kawakami B."/>
            <person name="Yamazaki M."/>
            <person name="Watanabe K."/>
            <person name="Kumagai A."/>
            <person name="Itakura S."/>
            <person name="Fukuzumi Y."/>
            <person name="Fujimori Y."/>
            <person name="Komiyama M."/>
            <person name="Tashiro H."/>
            <person name="Tanigami A."/>
            <person name="Fujiwara T."/>
            <person name="Ono T."/>
            <person name="Yamada K."/>
            <person name="Fujii Y."/>
            <person name="Ozaki K."/>
            <person name="Hirao M."/>
            <person name="Ohmori Y."/>
            <person name="Kawabata A."/>
            <person name="Hikiji T."/>
            <person name="Kobatake N."/>
            <person name="Inagaki H."/>
            <person name="Ikema Y."/>
            <person name="Okamoto S."/>
            <person name="Okitani R."/>
            <person name="Kawakami T."/>
            <person name="Noguchi S."/>
            <person name="Itoh T."/>
            <person name="Shigeta K."/>
            <person name="Senba T."/>
            <person name="Matsumura K."/>
            <person name="Nakajima Y."/>
            <person name="Mizuno T."/>
            <person name="Morinaga M."/>
            <person name="Sasaki M."/>
            <person name="Togashi T."/>
            <person name="Oyama M."/>
            <person name="Hata H."/>
            <person name="Watanabe M."/>
            <person name="Komatsu T."/>
            <person name="Mizushima-Sugano J."/>
            <person name="Satoh T."/>
            <person name="Shirai Y."/>
            <person name="Takahashi Y."/>
            <person name="Nakagawa K."/>
            <person name="Okumura K."/>
            <person name="Nagase T."/>
            <person name="Nomura N."/>
            <person name="Kikuchi H."/>
            <person name="Masuho Y."/>
            <person name="Yamashita R."/>
            <person name="Nakai K."/>
            <person name="Yada T."/>
            <person name="Nakamura Y."/>
            <person name="Ohara O."/>
            <person name="Isogai T."/>
            <person name="Sugano S."/>
        </authorList>
    </citation>
    <scope>NUCLEOTIDE SEQUENCE [LARGE SCALE MRNA]</scope>
    <scope>VARIANT CYS-179</scope>
    <source>
        <tissue>Lung</tissue>
        <tissue>Placenta</tissue>
    </source>
</reference>
<reference key="3">
    <citation type="journal article" date="2005" name="Nature">
        <title>Generation and annotation of the DNA sequences of human chromosomes 2 and 4.</title>
        <authorList>
            <person name="Hillier L.W."/>
            <person name="Graves T.A."/>
            <person name="Fulton R.S."/>
            <person name="Fulton L.A."/>
            <person name="Pepin K.H."/>
            <person name="Minx P."/>
            <person name="Wagner-McPherson C."/>
            <person name="Layman D."/>
            <person name="Wylie K."/>
            <person name="Sekhon M."/>
            <person name="Becker M.C."/>
            <person name="Fewell G.A."/>
            <person name="Delehaunty K.D."/>
            <person name="Miner T.L."/>
            <person name="Nash W.E."/>
            <person name="Kremitzki C."/>
            <person name="Oddy L."/>
            <person name="Du H."/>
            <person name="Sun H."/>
            <person name="Bradshaw-Cordum H."/>
            <person name="Ali J."/>
            <person name="Carter J."/>
            <person name="Cordes M."/>
            <person name="Harris A."/>
            <person name="Isak A."/>
            <person name="van Brunt A."/>
            <person name="Nguyen C."/>
            <person name="Du F."/>
            <person name="Courtney L."/>
            <person name="Kalicki J."/>
            <person name="Ozersky P."/>
            <person name="Abbott S."/>
            <person name="Armstrong J."/>
            <person name="Belter E.A."/>
            <person name="Caruso L."/>
            <person name="Cedroni M."/>
            <person name="Cotton M."/>
            <person name="Davidson T."/>
            <person name="Desai A."/>
            <person name="Elliott G."/>
            <person name="Erb T."/>
            <person name="Fronick C."/>
            <person name="Gaige T."/>
            <person name="Haakenson W."/>
            <person name="Haglund K."/>
            <person name="Holmes A."/>
            <person name="Harkins R."/>
            <person name="Kim K."/>
            <person name="Kruchowski S.S."/>
            <person name="Strong C.M."/>
            <person name="Grewal N."/>
            <person name="Goyea E."/>
            <person name="Hou S."/>
            <person name="Levy A."/>
            <person name="Martinka S."/>
            <person name="Mead K."/>
            <person name="McLellan M.D."/>
            <person name="Meyer R."/>
            <person name="Randall-Maher J."/>
            <person name="Tomlinson C."/>
            <person name="Dauphin-Kohlberg S."/>
            <person name="Kozlowicz-Reilly A."/>
            <person name="Shah N."/>
            <person name="Swearengen-Shahid S."/>
            <person name="Snider J."/>
            <person name="Strong J.T."/>
            <person name="Thompson J."/>
            <person name="Yoakum M."/>
            <person name="Leonard S."/>
            <person name="Pearman C."/>
            <person name="Trani L."/>
            <person name="Radionenko M."/>
            <person name="Waligorski J.E."/>
            <person name="Wang C."/>
            <person name="Rock S.M."/>
            <person name="Tin-Wollam A.-M."/>
            <person name="Maupin R."/>
            <person name="Latreille P."/>
            <person name="Wendl M.C."/>
            <person name="Yang S.-P."/>
            <person name="Pohl C."/>
            <person name="Wallis J.W."/>
            <person name="Spieth J."/>
            <person name="Bieri T.A."/>
            <person name="Berkowicz N."/>
            <person name="Nelson J.O."/>
            <person name="Osborne J."/>
            <person name="Ding L."/>
            <person name="Meyer R."/>
            <person name="Sabo A."/>
            <person name="Shotland Y."/>
            <person name="Sinha P."/>
            <person name="Wohldmann P.E."/>
            <person name="Cook L.L."/>
            <person name="Hickenbotham M.T."/>
            <person name="Eldred J."/>
            <person name="Williams D."/>
            <person name="Jones T.A."/>
            <person name="She X."/>
            <person name="Ciccarelli F.D."/>
            <person name="Izaurralde E."/>
            <person name="Taylor J."/>
            <person name="Schmutz J."/>
            <person name="Myers R.M."/>
            <person name="Cox D.R."/>
            <person name="Huang X."/>
            <person name="McPherson J.D."/>
            <person name="Mardis E.R."/>
            <person name="Clifton S.W."/>
            <person name="Warren W.C."/>
            <person name="Chinwalla A.T."/>
            <person name="Eddy S.R."/>
            <person name="Marra M.A."/>
            <person name="Ovcharenko I."/>
            <person name="Furey T.S."/>
            <person name="Miller W."/>
            <person name="Eichler E.E."/>
            <person name="Bork P."/>
            <person name="Suyama M."/>
            <person name="Torrents D."/>
            <person name="Waterston R.H."/>
            <person name="Wilson R.K."/>
        </authorList>
    </citation>
    <scope>NUCLEOTIDE SEQUENCE [LARGE SCALE GENOMIC DNA]</scope>
</reference>
<reference key="4">
    <citation type="submission" date="2005-07" db="EMBL/GenBank/DDBJ databases">
        <authorList>
            <person name="Mural R.J."/>
            <person name="Istrail S."/>
            <person name="Sutton G.G."/>
            <person name="Florea L."/>
            <person name="Halpern A.L."/>
            <person name="Mobarry C.M."/>
            <person name="Lippert R."/>
            <person name="Walenz B."/>
            <person name="Shatkay H."/>
            <person name="Dew I."/>
            <person name="Miller J.R."/>
            <person name="Flanigan M.J."/>
            <person name="Edwards N.J."/>
            <person name="Bolanos R."/>
            <person name="Fasulo D."/>
            <person name="Halldorsson B.V."/>
            <person name="Hannenhalli S."/>
            <person name="Turner R."/>
            <person name="Yooseph S."/>
            <person name="Lu F."/>
            <person name="Nusskern D.R."/>
            <person name="Shue B.C."/>
            <person name="Zheng X.H."/>
            <person name="Zhong F."/>
            <person name="Delcher A.L."/>
            <person name="Huson D.H."/>
            <person name="Kravitz S.A."/>
            <person name="Mouchard L."/>
            <person name="Reinert K."/>
            <person name="Remington K.A."/>
            <person name="Clark A.G."/>
            <person name="Waterman M.S."/>
            <person name="Eichler E.E."/>
            <person name="Adams M.D."/>
            <person name="Hunkapiller M.W."/>
            <person name="Myers E.W."/>
            <person name="Venter J.C."/>
        </authorList>
    </citation>
    <scope>NUCLEOTIDE SEQUENCE [LARGE SCALE GENOMIC DNA]</scope>
</reference>
<reference key="5">
    <citation type="journal article" date="2004" name="Genome Res.">
        <title>The status, quality, and expansion of the NIH full-length cDNA project: the Mammalian Gene Collection (MGC).</title>
        <authorList>
            <consortium name="The MGC Project Team"/>
        </authorList>
    </citation>
    <scope>NUCLEOTIDE SEQUENCE [LARGE SCALE MRNA]</scope>
    <scope>VARIANTS CYS-179 AND CYS-213</scope>
    <source>
        <tissue>Placenta</tissue>
        <tissue>Testis</tissue>
    </source>
</reference>
<reference key="6">
    <citation type="journal article" date="2008" name="Mol. Cell">
        <title>Kinase-selective enrichment enables quantitative phosphoproteomics of the kinome across the cell cycle.</title>
        <authorList>
            <person name="Daub H."/>
            <person name="Olsen J.V."/>
            <person name="Bairlein M."/>
            <person name="Gnad F."/>
            <person name="Oppermann F.S."/>
            <person name="Korner R."/>
            <person name="Greff Z."/>
            <person name="Keri G."/>
            <person name="Stemmann O."/>
            <person name="Mann M."/>
        </authorList>
    </citation>
    <scope>PHOSPHORYLATION [LARGE SCALE ANALYSIS] AT SER-298; SER-301 AND SER-305</scope>
    <scope>IDENTIFICATION BY MASS SPECTROMETRY [LARGE SCALE ANALYSIS]</scope>
    <source>
        <tissue>Cervix carcinoma</tissue>
    </source>
</reference>
<reference key="7">
    <citation type="journal article" date="2009" name="Anal. Chem.">
        <title>Lys-N and trypsin cover complementary parts of the phosphoproteome in a refined SCX-based approach.</title>
        <authorList>
            <person name="Gauci S."/>
            <person name="Helbig A.O."/>
            <person name="Slijper M."/>
            <person name="Krijgsveld J."/>
            <person name="Heck A.J."/>
            <person name="Mohammed S."/>
        </authorList>
    </citation>
    <scope>IDENTIFICATION BY MASS SPECTROMETRY [LARGE SCALE ANALYSIS]</scope>
</reference>
<reference key="8">
    <citation type="journal article" date="2011" name="BMC Syst. Biol.">
        <title>Initial characterization of the human central proteome.</title>
        <authorList>
            <person name="Burkard T.R."/>
            <person name="Planyavsky M."/>
            <person name="Kaupe I."/>
            <person name="Breitwieser F.P."/>
            <person name="Buerckstuemmer T."/>
            <person name="Bennett K.L."/>
            <person name="Superti-Furga G."/>
            <person name="Colinge J."/>
        </authorList>
    </citation>
    <scope>IDENTIFICATION BY MASS SPECTROMETRY [LARGE SCALE ANALYSIS]</scope>
</reference>
<reference key="9">
    <citation type="journal article" date="2013" name="J. Proteome Res.">
        <title>Toward a comprehensive characterization of a human cancer cell phosphoproteome.</title>
        <authorList>
            <person name="Zhou H."/>
            <person name="Di Palma S."/>
            <person name="Preisinger C."/>
            <person name="Peng M."/>
            <person name="Polat A.N."/>
            <person name="Heck A.J."/>
            <person name="Mohammed S."/>
        </authorList>
    </citation>
    <scope>IDENTIFICATION BY MASS SPECTROMETRY [LARGE SCALE ANALYSIS]</scope>
    <source>
        <tissue>Cervix carcinoma</tissue>
    </source>
</reference>
<reference key="10">
    <citation type="journal article" date="2015" name="Mol. Biol. Cell">
        <title>COMMD1 is linked to the WASH complex and regulates endosomal trafficking of the copper transporter ATP7A.</title>
        <authorList>
            <person name="Phillips-Krawczak C.A."/>
            <person name="Singla A."/>
            <person name="Starokadomskyy P."/>
            <person name="Deng Z."/>
            <person name="Osborne D.G."/>
            <person name="Li H."/>
            <person name="Dick C.J."/>
            <person name="Gomez T.S."/>
            <person name="Koenecke M."/>
            <person name="Zhang J.S."/>
            <person name="Dai H."/>
            <person name="Sifuentes-Dominguez L.F."/>
            <person name="Geng L.N."/>
            <person name="Kaufmann S.H."/>
            <person name="Hein M.Y."/>
            <person name="Wallis M."/>
            <person name="McGaughran J."/>
            <person name="Gecz J."/>
            <person name="van de Sluis B."/>
            <person name="Billadeau D.D."/>
            <person name="Burstein E."/>
        </authorList>
    </citation>
    <scope>FUNCTION</scope>
    <scope>IDENTIFICATION IN THE CCC COMPLEX</scope>
    <scope>SUBCELLULAR LOCATION</scope>
    <scope>SUBUNIT</scope>
</reference>
<reference key="11">
    <citation type="journal article" date="2015" name="Proteomics">
        <title>N-terminome analysis of the human mitochondrial proteome.</title>
        <authorList>
            <person name="Vaca Jacome A.S."/>
            <person name="Rabilloud T."/>
            <person name="Schaeffer-Reiss C."/>
            <person name="Rompais M."/>
            <person name="Ayoub D."/>
            <person name="Lane L."/>
            <person name="Bairoch A."/>
            <person name="Van Dorsselaer A."/>
            <person name="Carapito C."/>
        </authorList>
    </citation>
    <scope>IDENTIFICATION BY MASS SPECTROMETRY [LARGE SCALE ANALYSIS]</scope>
</reference>
<reference key="12">
    <citation type="journal article" date="2017" name="Nat. Cell Biol.">
        <title>Retriever is a multiprotein complex for retromer-independent endosomal cargo recycling.</title>
        <authorList>
            <person name="McNally K.E."/>
            <person name="Faulkner R."/>
            <person name="Steinberg F."/>
            <person name="Gallon M."/>
            <person name="Ghai R."/>
            <person name="Pim D."/>
            <person name="Langton P."/>
            <person name="Pearson N."/>
            <person name="Danson C.M."/>
            <person name="Naegele H."/>
            <person name="Morris L.L."/>
            <person name="Singla A."/>
            <person name="Overlee B.L."/>
            <person name="Heesom K.J."/>
            <person name="Sessions R."/>
            <person name="Banks L."/>
            <person name="Collins B.M."/>
            <person name="Berger I."/>
            <person name="Billadeau D.D."/>
            <person name="Burstein E."/>
            <person name="Cullen P.J."/>
        </authorList>
    </citation>
    <scope>FUNCTION</scope>
    <scope>INTERACTION WITH SNX17 AND SNX31</scope>
    <scope>FUNCTION (MICROBIAL INFECTION)</scope>
</reference>
<reference key="13">
    <citation type="journal article" date="2006" name="Science">
        <title>The consensus coding sequences of human breast and colorectal cancers.</title>
        <authorList>
            <person name="Sjoeblom T."/>
            <person name="Jones S."/>
            <person name="Wood L.D."/>
            <person name="Parsons D.W."/>
            <person name="Lin J."/>
            <person name="Barber T.D."/>
            <person name="Mandelker D."/>
            <person name="Leary R.J."/>
            <person name="Ptak J."/>
            <person name="Silliman N."/>
            <person name="Szabo S."/>
            <person name="Buckhaults P."/>
            <person name="Farrell C."/>
            <person name="Meeh P."/>
            <person name="Markowitz S.D."/>
            <person name="Willis J."/>
            <person name="Dawson D."/>
            <person name="Willson J.K.V."/>
            <person name="Gazdar A.F."/>
            <person name="Hartigan J."/>
            <person name="Wu L."/>
            <person name="Liu C."/>
            <person name="Parmigiani G."/>
            <person name="Park B.H."/>
            <person name="Bachman K.E."/>
            <person name="Papadopoulos N."/>
            <person name="Vogelstein B."/>
            <person name="Kinzler K.W."/>
            <person name="Velculescu V.E."/>
        </authorList>
    </citation>
    <scope>VARIANT [LARGE SCALE ANALYSIS] ARG-315</scope>
</reference>
<reference evidence="11" key="14">
    <citation type="journal article" date="2023" name="Cell">
        <title>Structure of the endosomal commander complex linked to Ritscher-Schinzel syndrome.</title>
        <authorList>
            <person name="Healy M.D."/>
            <person name="McNally K.E."/>
            <person name="Butkovic R."/>
            <person name="Chilton M."/>
            <person name="Kato K."/>
            <person name="Sacharz J."/>
            <person name="McConville C."/>
            <person name="Moody E.R.R."/>
            <person name="Shaw S."/>
            <person name="Planelles-Herrero V.J."/>
            <person name="Yadav S.K.N."/>
            <person name="Ross J."/>
            <person name="Borucu U."/>
            <person name="Palmer C.S."/>
            <person name="Chen K.E."/>
            <person name="Croll T.I."/>
            <person name="Hall R.J."/>
            <person name="Caruana N.J."/>
            <person name="Ghai R."/>
            <person name="Nguyen T.H.D."/>
            <person name="Heesom K.J."/>
            <person name="Saitoh S."/>
            <person name="Berger I."/>
            <person name="Schaffitzel C."/>
            <person name="Williams T.A."/>
            <person name="Stroud D.A."/>
            <person name="Derivery E."/>
            <person name="Collins B.M."/>
            <person name="Cullen P.J."/>
        </authorList>
    </citation>
    <scope>STRUCTURE BY ELECTRON MICROSCOPY (3.53 ANGSTROMS) OF THE CCC COMPLEX</scope>
    <scope>FUNCTION</scope>
    <scope>SUBUNIT</scope>
    <scope>INTERACTION WITH DENND10</scope>
    <scope>MUTAGENESIS OF HIS-406 AND GLU-410</scope>
</reference>
<reference evidence="12 13 14" key="15">
    <citation type="journal article" date="2024" name="Nat. Struct. Mol. Biol.">
        <title>Structure and interactions of the endogenous human commander complex.</title>
        <authorList>
            <person name="Laulumaa S."/>
            <person name="Kumpula E.P."/>
            <person name="Huiskonen J.T."/>
            <person name="Varjosalo M."/>
        </authorList>
    </citation>
    <scope>STRUCTURE BY ELECTRON MICROSCOPY (2.90 ANGSTROMS) IN COMPLEXES WITH THE CCC COMPLEX; THE RETRIEVER COMPLEX; CCDC22 AND DENND10</scope>
    <scope>FUNCTION</scope>
    <scope>SUBUNIT</scope>
    <scope>INTERACTION WITH DENND10</scope>
    <scope>COILED COIL</scope>
</reference>